<accession>Q10494</accession>
<gene>
    <name type="ORF">SPAC26F1.07</name>
</gene>
<proteinExistence type="inferred from homology"/>
<dbReference type="EC" id="1.-.-.-"/>
<dbReference type="EMBL" id="CU329670">
    <property type="protein sequence ID" value="CAA97364.1"/>
    <property type="molecule type" value="Genomic_DNA"/>
</dbReference>
<dbReference type="PIR" id="T38413">
    <property type="entry name" value="T38413"/>
</dbReference>
<dbReference type="RefSeq" id="NP_594888.1">
    <property type="nucleotide sequence ID" value="NM_001020317.2"/>
</dbReference>
<dbReference type="SMR" id="Q10494"/>
<dbReference type="BioGRID" id="278565">
    <property type="interactions" value="2"/>
</dbReference>
<dbReference type="FunCoup" id="Q10494">
    <property type="interactions" value="522"/>
</dbReference>
<dbReference type="STRING" id="284812.Q10494"/>
<dbReference type="iPTMnet" id="Q10494"/>
<dbReference type="PaxDb" id="4896-SPAC26F1.07.1"/>
<dbReference type="EnsemblFungi" id="SPAC26F1.07.1">
    <property type="protein sequence ID" value="SPAC26F1.07.1:pep"/>
    <property type="gene ID" value="SPAC26F1.07"/>
</dbReference>
<dbReference type="KEGG" id="spo:2542088"/>
<dbReference type="PomBase" id="SPAC26F1.07"/>
<dbReference type="VEuPathDB" id="FungiDB:SPAC26F1.07"/>
<dbReference type="eggNOG" id="KOG1577">
    <property type="taxonomic scope" value="Eukaryota"/>
</dbReference>
<dbReference type="HOGENOM" id="CLU_023205_0_0_1"/>
<dbReference type="InParanoid" id="Q10494"/>
<dbReference type="OMA" id="CHFKGIT"/>
<dbReference type="PhylomeDB" id="Q10494"/>
<dbReference type="Reactome" id="R-SPO-156590">
    <property type="pathway name" value="Glutathione conjugation"/>
</dbReference>
<dbReference type="Reactome" id="R-SPO-193144">
    <property type="pathway name" value="Estrogen biosynthesis"/>
</dbReference>
<dbReference type="Reactome" id="R-SPO-193368">
    <property type="pathway name" value="Synthesis of bile acids and bile salts via 7alpha-hydroxycholesterol"/>
</dbReference>
<dbReference type="Reactome" id="R-SPO-193775">
    <property type="pathway name" value="Synthesis of bile acids and bile salts via 24-hydroxycholesterol"/>
</dbReference>
<dbReference type="Reactome" id="R-SPO-193807">
    <property type="pathway name" value="Synthesis of bile acids and bile salts via 27-hydroxycholesterol"/>
</dbReference>
<dbReference type="Reactome" id="R-SPO-196108">
    <property type="pathway name" value="Pregnenolone biosynthesis"/>
</dbReference>
<dbReference type="Reactome" id="R-SPO-2162123">
    <property type="pathway name" value="Synthesis of Prostaglandins (PG) and Thromboxanes (TX)"/>
</dbReference>
<dbReference type="Reactome" id="R-SPO-5365859">
    <property type="pathway name" value="RA biosynthesis pathway"/>
</dbReference>
<dbReference type="Reactome" id="R-SPO-5652227">
    <property type="pathway name" value="Fructose biosynthesis"/>
</dbReference>
<dbReference type="Reactome" id="R-SPO-5661270">
    <property type="pathway name" value="Formation of xylulose-5-phosphate"/>
</dbReference>
<dbReference type="Reactome" id="R-SPO-9757110">
    <property type="pathway name" value="Prednisone ADME"/>
</dbReference>
<dbReference type="PRO" id="PR:Q10494"/>
<dbReference type="Proteomes" id="UP000002485">
    <property type="component" value="Chromosome I"/>
</dbReference>
<dbReference type="GO" id="GO:0005829">
    <property type="term" value="C:cytosol"/>
    <property type="evidence" value="ECO:0007005"/>
    <property type="project" value="PomBase"/>
</dbReference>
<dbReference type="GO" id="GO:0005634">
    <property type="term" value="C:nucleus"/>
    <property type="evidence" value="ECO:0007005"/>
    <property type="project" value="PomBase"/>
</dbReference>
<dbReference type="GO" id="GO:0004032">
    <property type="term" value="F:aldose reductase (NADPH) activity"/>
    <property type="evidence" value="ECO:0000318"/>
    <property type="project" value="GO_Central"/>
</dbReference>
<dbReference type="GO" id="GO:0019568">
    <property type="term" value="P:arabinose catabolic process"/>
    <property type="evidence" value="ECO:0000266"/>
    <property type="project" value="PomBase"/>
</dbReference>
<dbReference type="GO" id="GO:1990748">
    <property type="term" value="P:cellular detoxification"/>
    <property type="evidence" value="ECO:0000304"/>
    <property type="project" value="PomBase"/>
</dbReference>
<dbReference type="GO" id="GO:0042843">
    <property type="term" value="P:D-xylose catabolic process"/>
    <property type="evidence" value="ECO:0000266"/>
    <property type="project" value="PomBase"/>
</dbReference>
<dbReference type="FunFam" id="3.20.20.100:FF:000036">
    <property type="entry name" value="NADP-dependent oxidoreductase domain-containing protein"/>
    <property type="match status" value="1"/>
</dbReference>
<dbReference type="Gene3D" id="3.20.20.100">
    <property type="entry name" value="NADP-dependent oxidoreductase domain"/>
    <property type="match status" value="1"/>
</dbReference>
<dbReference type="InterPro" id="IPR020471">
    <property type="entry name" value="AKR"/>
</dbReference>
<dbReference type="InterPro" id="IPR018170">
    <property type="entry name" value="Aldo/ket_reductase_CS"/>
</dbReference>
<dbReference type="InterPro" id="IPR023210">
    <property type="entry name" value="NADP_OxRdtase_dom"/>
</dbReference>
<dbReference type="InterPro" id="IPR036812">
    <property type="entry name" value="NADP_OxRdtase_dom_sf"/>
</dbReference>
<dbReference type="PANTHER" id="PTHR11732">
    <property type="entry name" value="ALDO/KETO REDUCTASE"/>
    <property type="match status" value="1"/>
</dbReference>
<dbReference type="Pfam" id="PF00248">
    <property type="entry name" value="Aldo_ket_red"/>
    <property type="match status" value="1"/>
</dbReference>
<dbReference type="PIRSF" id="PIRSF000097">
    <property type="entry name" value="AKR"/>
    <property type="match status" value="1"/>
</dbReference>
<dbReference type="PRINTS" id="PR00069">
    <property type="entry name" value="ALDKETRDTASE"/>
</dbReference>
<dbReference type="SUPFAM" id="SSF51430">
    <property type="entry name" value="NAD(P)-linked oxidoreductase"/>
    <property type="match status" value="1"/>
</dbReference>
<dbReference type="PROSITE" id="PS00798">
    <property type="entry name" value="ALDOKETO_REDUCTASE_1"/>
    <property type="match status" value="1"/>
</dbReference>
<dbReference type="PROSITE" id="PS00062">
    <property type="entry name" value="ALDOKETO_REDUCTASE_2"/>
    <property type="match status" value="1"/>
</dbReference>
<name>YDG7_SCHPO</name>
<evidence type="ECO:0000250" key="1"/>
<evidence type="ECO:0000305" key="2"/>
<organism>
    <name type="scientific">Schizosaccharomyces pombe (strain 972 / ATCC 24843)</name>
    <name type="common">Fission yeast</name>
    <dbReference type="NCBI Taxonomy" id="284812"/>
    <lineage>
        <taxon>Eukaryota</taxon>
        <taxon>Fungi</taxon>
        <taxon>Dikarya</taxon>
        <taxon>Ascomycota</taxon>
        <taxon>Taphrinomycotina</taxon>
        <taxon>Schizosaccharomycetes</taxon>
        <taxon>Schizosaccharomycetales</taxon>
        <taxon>Schizosaccharomycetaceae</taxon>
        <taxon>Schizosaccharomyces</taxon>
    </lineage>
</organism>
<reference key="1">
    <citation type="journal article" date="2002" name="Nature">
        <title>The genome sequence of Schizosaccharomyces pombe.</title>
        <authorList>
            <person name="Wood V."/>
            <person name="Gwilliam R."/>
            <person name="Rajandream M.A."/>
            <person name="Lyne M.H."/>
            <person name="Lyne R."/>
            <person name="Stewart A."/>
            <person name="Sgouros J.G."/>
            <person name="Peat N."/>
            <person name="Hayles J."/>
            <person name="Baker S.G."/>
            <person name="Basham D."/>
            <person name="Bowman S."/>
            <person name="Brooks K."/>
            <person name="Brown D."/>
            <person name="Brown S."/>
            <person name="Chillingworth T."/>
            <person name="Churcher C.M."/>
            <person name="Collins M."/>
            <person name="Connor R."/>
            <person name="Cronin A."/>
            <person name="Davis P."/>
            <person name="Feltwell T."/>
            <person name="Fraser A."/>
            <person name="Gentles S."/>
            <person name="Goble A."/>
            <person name="Hamlin N."/>
            <person name="Harris D.E."/>
            <person name="Hidalgo J."/>
            <person name="Hodgson G."/>
            <person name="Holroyd S."/>
            <person name="Hornsby T."/>
            <person name="Howarth S."/>
            <person name="Huckle E.J."/>
            <person name="Hunt S."/>
            <person name="Jagels K."/>
            <person name="James K.D."/>
            <person name="Jones L."/>
            <person name="Jones M."/>
            <person name="Leather S."/>
            <person name="McDonald S."/>
            <person name="McLean J."/>
            <person name="Mooney P."/>
            <person name="Moule S."/>
            <person name="Mungall K.L."/>
            <person name="Murphy L.D."/>
            <person name="Niblett D."/>
            <person name="Odell C."/>
            <person name="Oliver K."/>
            <person name="O'Neil S."/>
            <person name="Pearson D."/>
            <person name="Quail M.A."/>
            <person name="Rabbinowitsch E."/>
            <person name="Rutherford K.M."/>
            <person name="Rutter S."/>
            <person name="Saunders D."/>
            <person name="Seeger K."/>
            <person name="Sharp S."/>
            <person name="Skelton J."/>
            <person name="Simmonds M.N."/>
            <person name="Squares R."/>
            <person name="Squares S."/>
            <person name="Stevens K."/>
            <person name="Taylor K."/>
            <person name="Taylor R.G."/>
            <person name="Tivey A."/>
            <person name="Walsh S.V."/>
            <person name="Warren T."/>
            <person name="Whitehead S."/>
            <person name="Woodward J.R."/>
            <person name="Volckaert G."/>
            <person name="Aert R."/>
            <person name="Robben J."/>
            <person name="Grymonprez B."/>
            <person name="Weltjens I."/>
            <person name="Vanstreels E."/>
            <person name="Rieger M."/>
            <person name="Schaefer M."/>
            <person name="Mueller-Auer S."/>
            <person name="Gabel C."/>
            <person name="Fuchs M."/>
            <person name="Duesterhoeft A."/>
            <person name="Fritzc C."/>
            <person name="Holzer E."/>
            <person name="Moestl D."/>
            <person name="Hilbert H."/>
            <person name="Borzym K."/>
            <person name="Langer I."/>
            <person name="Beck A."/>
            <person name="Lehrach H."/>
            <person name="Reinhardt R."/>
            <person name="Pohl T.M."/>
            <person name="Eger P."/>
            <person name="Zimmermann W."/>
            <person name="Wedler H."/>
            <person name="Wambutt R."/>
            <person name="Purnelle B."/>
            <person name="Goffeau A."/>
            <person name="Cadieu E."/>
            <person name="Dreano S."/>
            <person name="Gloux S."/>
            <person name="Lelaure V."/>
            <person name="Mottier S."/>
            <person name="Galibert F."/>
            <person name="Aves S.J."/>
            <person name="Xiang Z."/>
            <person name="Hunt C."/>
            <person name="Moore K."/>
            <person name="Hurst S.M."/>
            <person name="Lucas M."/>
            <person name="Rochet M."/>
            <person name="Gaillardin C."/>
            <person name="Tallada V.A."/>
            <person name="Garzon A."/>
            <person name="Thode G."/>
            <person name="Daga R.R."/>
            <person name="Cruzado L."/>
            <person name="Jimenez J."/>
            <person name="Sanchez M."/>
            <person name="del Rey F."/>
            <person name="Benito J."/>
            <person name="Dominguez A."/>
            <person name="Revuelta J.L."/>
            <person name="Moreno S."/>
            <person name="Armstrong J."/>
            <person name="Forsburg S.L."/>
            <person name="Cerutti L."/>
            <person name="Lowe T."/>
            <person name="McCombie W.R."/>
            <person name="Paulsen I."/>
            <person name="Potashkin J."/>
            <person name="Shpakovski G.V."/>
            <person name="Ussery D."/>
            <person name="Barrell B.G."/>
            <person name="Nurse P."/>
        </authorList>
    </citation>
    <scope>NUCLEOTIDE SEQUENCE [LARGE SCALE GENOMIC DNA]</scope>
    <source>
        <strain>972 / ATCC 24843</strain>
    </source>
</reference>
<feature type="chain" id="PRO_0000124680" description="Uncharacterized oxidoreductase C26F1.07">
    <location>
        <begin position="1"/>
        <end position="321"/>
    </location>
</feature>
<feature type="active site" description="Proton donor" evidence="1">
    <location>
        <position position="60"/>
    </location>
</feature>
<feature type="binding site" evidence="1">
    <location>
        <position position="118"/>
    </location>
    <ligand>
        <name>substrate</name>
    </ligand>
</feature>
<feature type="site" description="Lowers pKa of active site Tyr" evidence="1">
    <location>
        <position position="85"/>
    </location>
</feature>
<comment type="similarity">
    <text evidence="2">Belongs to the aldo/keto reductase family.</text>
</comment>
<protein>
    <recommendedName>
        <fullName>Uncharacterized oxidoreductase C26F1.07</fullName>
        <ecNumber>1.-.-.-</ecNumber>
    </recommendedName>
</protein>
<keyword id="KW-0560">Oxidoreductase</keyword>
<keyword id="KW-1185">Reference proteome</keyword>
<sequence length="321" mass="36192">MSAEQKYFENAQNVHFTLADGSKIPGLGLGTWRSEPNQTKNAVKTALQYGYRHIDAAAIYGNEDEVGDGIKESGVPRKDIWVTSKLWCNAHAPEAVPKALEKTLKDLKLDYLDEYLIHWPVSFKTGEDKFPKDKDGNLIYEKNPIEETWKAMEKLLETGKVRHIGLSNFNDTNLERILKVAKVKPAVHQMELHPFLPQTEFVEKHKKLGIHVTAYSPFGNQNTIYESKIPKLIEHETIQKIAKSKGEGVTGATIAVSWAITRGTSVIPKSVNEQRIKSNFKYIPLTKEDMDEINSIGIRARFNQATFSNEPVFAGLEDGRT</sequence>